<comment type="function">
    <text evidence="1">Key component of the proton channel; it plays a direct role in the translocation of protons across the membrane.</text>
</comment>
<comment type="subunit">
    <text evidence="1">F-type ATPases have 2 components, CF(1) - the catalytic core - and CF(0) - the membrane proton channel. CF(1) has five subunits: alpha(3), beta(3), gamma(1), delta(1), epsilon(1). CF(0) has three main subunits: a(1), b(2) and c(9-12). The alpha and beta chains form an alternating ring which encloses part of the gamma chain. CF(1) is attached to CF(0) by a central stalk formed by the gamma and epsilon chains, while a peripheral stalk is formed by the delta and b chains.</text>
</comment>
<comment type="subcellular location">
    <subcellularLocation>
        <location evidence="1">Cell membrane</location>
        <topology evidence="1">Multi-pass membrane protein</topology>
    </subcellularLocation>
</comment>
<comment type="similarity">
    <text evidence="1">Belongs to the ATPase A chain family.</text>
</comment>
<gene>
    <name evidence="1" type="primary">atpB</name>
    <name type="ordered locus">OB2981</name>
</gene>
<evidence type="ECO:0000255" key="1">
    <source>
        <dbReference type="HAMAP-Rule" id="MF_01393"/>
    </source>
</evidence>
<sequence>MDHENPIVHDIFGIPGANLNLSNLMMTFIVCLIVFVFCVWGSRKLQMKPKGIQNFMEWAVEFVRGIIQDNMDWKTGRIFLPLGLTLIFYILVSNLIGVATVGVVEHDLWWKSPTADAVMTLTLSTMIIALTHYYGIKLRGTKAYLKTYVSPVPLMLPFKIVEEFTNTLTLGLRLFGNIYAGEILLSLLVGLATTSIFGFFGAALPMLAWQTFSVFIGAIQSYVFVMLTMVYMSHKVSSDH</sequence>
<organism>
    <name type="scientific">Oceanobacillus iheyensis (strain DSM 14371 / CIP 107618 / JCM 11309 / KCTC 3954 / HTE831)</name>
    <dbReference type="NCBI Taxonomy" id="221109"/>
    <lineage>
        <taxon>Bacteria</taxon>
        <taxon>Bacillati</taxon>
        <taxon>Bacillota</taxon>
        <taxon>Bacilli</taxon>
        <taxon>Bacillales</taxon>
        <taxon>Bacillaceae</taxon>
        <taxon>Oceanobacillus</taxon>
    </lineage>
</organism>
<reference key="1">
    <citation type="journal article" date="2002" name="Nucleic Acids Res.">
        <title>Genome sequence of Oceanobacillus iheyensis isolated from the Iheya Ridge and its unexpected adaptive capabilities to extreme environments.</title>
        <authorList>
            <person name="Takami H."/>
            <person name="Takaki Y."/>
            <person name="Uchiyama I."/>
        </authorList>
    </citation>
    <scope>NUCLEOTIDE SEQUENCE [LARGE SCALE GENOMIC DNA]</scope>
    <source>
        <strain>DSM 14371 / CIP 107618 / JCM 11309 / KCTC 3954 / HTE831</strain>
    </source>
</reference>
<proteinExistence type="inferred from homology"/>
<protein>
    <recommendedName>
        <fullName evidence="1">ATP synthase subunit a</fullName>
    </recommendedName>
    <alternativeName>
        <fullName evidence="1">ATP synthase F0 sector subunit a</fullName>
    </alternativeName>
    <alternativeName>
        <fullName evidence="1">F-ATPase subunit 6</fullName>
    </alternativeName>
</protein>
<feature type="chain" id="PRO_1000145294" description="ATP synthase subunit a">
    <location>
        <begin position="1"/>
        <end position="240"/>
    </location>
</feature>
<feature type="transmembrane region" description="Helical" evidence="1">
    <location>
        <begin position="21"/>
        <end position="41"/>
    </location>
</feature>
<feature type="transmembrane region" description="Helical" evidence="1">
    <location>
        <begin position="78"/>
        <end position="98"/>
    </location>
</feature>
<feature type="transmembrane region" description="Helical" evidence="1">
    <location>
        <begin position="116"/>
        <end position="136"/>
    </location>
</feature>
<feature type="transmembrane region" description="Helical" evidence="1">
    <location>
        <begin position="183"/>
        <end position="203"/>
    </location>
</feature>
<feature type="transmembrane region" description="Helical" evidence="1">
    <location>
        <begin position="212"/>
        <end position="232"/>
    </location>
</feature>
<dbReference type="EMBL" id="BA000028">
    <property type="protein sequence ID" value="BAC14937.1"/>
    <property type="molecule type" value="Genomic_DNA"/>
</dbReference>
<dbReference type="RefSeq" id="WP_011067378.1">
    <property type="nucleotide sequence ID" value="NC_004193.1"/>
</dbReference>
<dbReference type="SMR" id="Q8EM77"/>
<dbReference type="STRING" id="221109.gene:10735233"/>
<dbReference type="KEGG" id="oih:OB2981"/>
<dbReference type="eggNOG" id="COG0356">
    <property type="taxonomic scope" value="Bacteria"/>
</dbReference>
<dbReference type="HOGENOM" id="CLU_041018_2_3_9"/>
<dbReference type="OrthoDB" id="9789241at2"/>
<dbReference type="PhylomeDB" id="Q8EM77"/>
<dbReference type="Proteomes" id="UP000000822">
    <property type="component" value="Chromosome"/>
</dbReference>
<dbReference type="GO" id="GO:0005886">
    <property type="term" value="C:plasma membrane"/>
    <property type="evidence" value="ECO:0007669"/>
    <property type="project" value="UniProtKB-SubCell"/>
</dbReference>
<dbReference type="GO" id="GO:0045259">
    <property type="term" value="C:proton-transporting ATP synthase complex"/>
    <property type="evidence" value="ECO:0007669"/>
    <property type="project" value="UniProtKB-KW"/>
</dbReference>
<dbReference type="GO" id="GO:0046933">
    <property type="term" value="F:proton-transporting ATP synthase activity, rotational mechanism"/>
    <property type="evidence" value="ECO:0007669"/>
    <property type="project" value="UniProtKB-UniRule"/>
</dbReference>
<dbReference type="GO" id="GO:0042777">
    <property type="term" value="P:proton motive force-driven plasma membrane ATP synthesis"/>
    <property type="evidence" value="ECO:0007669"/>
    <property type="project" value="TreeGrafter"/>
</dbReference>
<dbReference type="CDD" id="cd00310">
    <property type="entry name" value="ATP-synt_Fo_a_6"/>
    <property type="match status" value="1"/>
</dbReference>
<dbReference type="Gene3D" id="1.20.120.220">
    <property type="entry name" value="ATP synthase, F0 complex, subunit A"/>
    <property type="match status" value="1"/>
</dbReference>
<dbReference type="HAMAP" id="MF_01393">
    <property type="entry name" value="ATP_synth_a_bact"/>
    <property type="match status" value="1"/>
</dbReference>
<dbReference type="InterPro" id="IPR045082">
    <property type="entry name" value="ATP_syn_F0_a_bact/chloroplast"/>
</dbReference>
<dbReference type="InterPro" id="IPR000568">
    <property type="entry name" value="ATP_synth_F0_asu"/>
</dbReference>
<dbReference type="InterPro" id="IPR023011">
    <property type="entry name" value="ATP_synth_F0_asu_AS"/>
</dbReference>
<dbReference type="InterPro" id="IPR035908">
    <property type="entry name" value="F0_ATP_A_sf"/>
</dbReference>
<dbReference type="NCBIfam" id="TIGR01131">
    <property type="entry name" value="ATP_synt_6_or_A"/>
    <property type="match status" value="1"/>
</dbReference>
<dbReference type="NCBIfam" id="NF004479">
    <property type="entry name" value="PRK05815.1-4"/>
    <property type="match status" value="1"/>
</dbReference>
<dbReference type="PANTHER" id="PTHR42823">
    <property type="entry name" value="ATP SYNTHASE SUBUNIT A, CHLOROPLASTIC"/>
    <property type="match status" value="1"/>
</dbReference>
<dbReference type="PANTHER" id="PTHR42823:SF3">
    <property type="entry name" value="ATP SYNTHASE SUBUNIT A, CHLOROPLASTIC"/>
    <property type="match status" value="1"/>
</dbReference>
<dbReference type="Pfam" id="PF00119">
    <property type="entry name" value="ATP-synt_A"/>
    <property type="match status" value="1"/>
</dbReference>
<dbReference type="PRINTS" id="PR00123">
    <property type="entry name" value="ATPASEA"/>
</dbReference>
<dbReference type="SUPFAM" id="SSF81336">
    <property type="entry name" value="F1F0 ATP synthase subunit A"/>
    <property type="match status" value="1"/>
</dbReference>
<dbReference type="PROSITE" id="PS00449">
    <property type="entry name" value="ATPASE_A"/>
    <property type="match status" value="1"/>
</dbReference>
<name>ATP6_OCEIH</name>
<keyword id="KW-0066">ATP synthesis</keyword>
<keyword id="KW-1003">Cell membrane</keyword>
<keyword id="KW-0138">CF(0)</keyword>
<keyword id="KW-0375">Hydrogen ion transport</keyword>
<keyword id="KW-0406">Ion transport</keyword>
<keyword id="KW-0472">Membrane</keyword>
<keyword id="KW-1185">Reference proteome</keyword>
<keyword id="KW-0812">Transmembrane</keyword>
<keyword id="KW-1133">Transmembrane helix</keyword>
<keyword id="KW-0813">Transport</keyword>
<accession>Q8EM77</accession>